<dbReference type="EC" id="2.1.1.176" evidence="1"/>
<dbReference type="EMBL" id="CP001138">
    <property type="protein sequence ID" value="ACH51072.1"/>
    <property type="molecule type" value="Genomic_DNA"/>
</dbReference>
<dbReference type="RefSeq" id="WP_000744612.1">
    <property type="nucleotide sequence ID" value="NC_011149.1"/>
</dbReference>
<dbReference type="SMR" id="B5F7R5"/>
<dbReference type="KEGG" id="sea:SeAg_B3604"/>
<dbReference type="HOGENOM" id="CLU_005316_0_4_6"/>
<dbReference type="Proteomes" id="UP000008819">
    <property type="component" value="Chromosome"/>
</dbReference>
<dbReference type="GO" id="GO:0005829">
    <property type="term" value="C:cytosol"/>
    <property type="evidence" value="ECO:0007669"/>
    <property type="project" value="TreeGrafter"/>
</dbReference>
<dbReference type="GO" id="GO:0003723">
    <property type="term" value="F:RNA binding"/>
    <property type="evidence" value="ECO:0007669"/>
    <property type="project" value="UniProtKB-KW"/>
</dbReference>
<dbReference type="GO" id="GO:0009383">
    <property type="term" value="F:rRNA (cytosine-C5-)-methyltransferase activity"/>
    <property type="evidence" value="ECO:0007669"/>
    <property type="project" value="TreeGrafter"/>
</dbReference>
<dbReference type="GO" id="GO:0006355">
    <property type="term" value="P:regulation of DNA-templated transcription"/>
    <property type="evidence" value="ECO:0007669"/>
    <property type="project" value="InterPro"/>
</dbReference>
<dbReference type="GO" id="GO:0070475">
    <property type="term" value="P:rRNA base methylation"/>
    <property type="evidence" value="ECO:0007669"/>
    <property type="project" value="TreeGrafter"/>
</dbReference>
<dbReference type="CDD" id="cd02440">
    <property type="entry name" value="AdoMet_MTases"/>
    <property type="match status" value="1"/>
</dbReference>
<dbReference type="CDD" id="cd00620">
    <property type="entry name" value="Methyltransferase_Sun"/>
    <property type="match status" value="1"/>
</dbReference>
<dbReference type="FunFam" id="1.10.287.730:FF:000001">
    <property type="entry name" value="Ribosomal RNA small subunit methyltransferase B"/>
    <property type="match status" value="1"/>
</dbReference>
<dbReference type="FunFam" id="1.10.940.10:FF:000002">
    <property type="entry name" value="Ribosomal RNA small subunit methyltransferase B"/>
    <property type="match status" value="1"/>
</dbReference>
<dbReference type="FunFam" id="3.30.70.1170:FF:000002">
    <property type="entry name" value="Ribosomal RNA small subunit methyltransferase B"/>
    <property type="match status" value="1"/>
</dbReference>
<dbReference type="FunFam" id="3.40.50.150:FF:000022">
    <property type="entry name" value="Ribosomal RNA small subunit methyltransferase B"/>
    <property type="match status" value="1"/>
</dbReference>
<dbReference type="Gene3D" id="1.10.287.730">
    <property type="entry name" value="Helix hairpin bin"/>
    <property type="match status" value="1"/>
</dbReference>
<dbReference type="Gene3D" id="1.10.940.10">
    <property type="entry name" value="NusB-like"/>
    <property type="match status" value="1"/>
</dbReference>
<dbReference type="Gene3D" id="3.30.70.1170">
    <property type="entry name" value="Sun protein, domain 3"/>
    <property type="match status" value="1"/>
</dbReference>
<dbReference type="Gene3D" id="3.40.50.150">
    <property type="entry name" value="Vaccinia Virus protein VP39"/>
    <property type="match status" value="1"/>
</dbReference>
<dbReference type="HAMAP" id="MF_01856">
    <property type="entry name" value="16SrRNA_methyltr_B"/>
    <property type="match status" value="1"/>
</dbReference>
<dbReference type="InterPro" id="IPR049560">
    <property type="entry name" value="MeTrfase_RsmB-F_NOP2_cat"/>
</dbReference>
<dbReference type="InterPro" id="IPR001678">
    <property type="entry name" value="MeTrfase_RsmB-F_NOP2_dom"/>
</dbReference>
<dbReference type="InterPro" id="IPR035926">
    <property type="entry name" value="NusB-like_sf"/>
</dbReference>
<dbReference type="InterPro" id="IPR006027">
    <property type="entry name" value="NusB_RsmB_TIM44"/>
</dbReference>
<dbReference type="InterPro" id="IPR023267">
    <property type="entry name" value="RCMT"/>
</dbReference>
<dbReference type="InterPro" id="IPR004573">
    <property type="entry name" value="rRNA_ssu_MeTfrase_B"/>
</dbReference>
<dbReference type="InterPro" id="IPR023541">
    <property type="entry name" value="rRNA_ssu_MeTfrase_B_ent"/>
</dbReference>
<dbReference type="InterPro" id="IPR054728">
    <property type="entry name" value="RsmB-like_ferredoxin"/>
</dbReference>
<dbReference type="InterPro" id="IPR048019">
    <property type="entry name" value="RsmB-like_N"/>
</dbReference>
<dbReference type="InterPro" id="IPR018314">
    <property type="entry name" value="RsmB/NOL1/NOP2-like_CS"/>
</dbReference>
<dbReference type="InterPro" id="IPR029063">
    <property type="entry name" value="SAM-dependent_MTases_sf"/>
</dbReference>
<dbReference type="NCBIfam" id="NF008149">
    <property type="entry name" value="PRK10901.1"/>
    <property type="match status" value="1"/>
</dbReference>
<dbReference type="NCBIfam" id="NF011494">
    <property type="entry name" value="PRK14902.1"/>
    <property type="match status" value="1"/>
</dbReference>
<dbReference type="NCBIfam" id="TIGR00563">
    <property type="entry name" value="rsmB"/>
    <property type="match status" value="1"/>
</dbReference>
<dbReference type="PANTHER" id="PTHR22807:SF61">
    <property type="entry name" value="NOL1_NOP2_SUN FAMILY PROTEIN _ ANTITERMINATION NUSB DOMAIN-CONTAINING PROTEIN"/>
    <property type="match status" value="1"/>
</dbReference>
<dbReference type="PANTHER" id="PTHR22807">
    <property type="entry name" value="NOP2 YEAST -RELATED NOL1/NOP2/FMU SUN DOMAIN-CONTAINING"/>
    <property type="match status" value="1"/>
</dbReference>
<dbReference type="Pfam" id="PF01189">
    <property type="entry name" value="Methyltr_RsmB-F"/>
    <property type="match status" value="1"/>
</dbReference>
<dbReference type="Pfam" id="PF01029">
    <property type="entry name" value="NusB"/>
    <property type="match status" value="1"/>
</dbReference>
<dbReference type="Pfam" id="PF22458">
    <property type="entry name" value="RsmF-B_ferredox"/>
    <property type="match status" value="1"/>
</dbReference>
<dbReference type="PRINTS" id="PR02008">
    <property type="entry name" value="RCMTFAMILY"/>
</dbReference>
<dbReference type="SUPFAM" id="SSF48013">
    <property type="entry name" value="NusB-like"/>
    <property type="match status" value="1"/>
</dbReference>
<dbReference type="SUPFAM" id="SSF53335">
    <property type="entry name" value="S-adenosyl-L-methionine-dependent methyltransferases"/>
    <property type="match status" value="1"/>
</dbReference>
<dbReference type="PROSITE" id="PS01153">
    <property type="entry name" value="NOL1_NOP2_SUN"/>
    <property type="match status" value="1"/>
</dbReference>
<dbReference type="PROSITE" id="PS51686">
    <property type="entry name" value="SAM_MT_RSMB_NOP"/>
    <property type="match status" value="1"/>
</dbReference>
<protein>
    <recommendedName>
        <fullName evidence="1">Ribosomal RNA small subunit methyltransferase B</fullName>
        <ecNumber evidence="1">2.1.1.176</ecNumber>
    </recommendedName>
    <alternativeName>
        <fullName evidence="1">16S rRNA m5C967 methyltransferase</fullName>
    </alternativeName>
    <alternativeName>
        <fullName evidence="1">rRNA (cytosine-C(5)-)-methyltransferase RsmB</fullName>
    </alternativeName>
</protein>
<gene>
    <name evidence="1" type="primary">rsmB</name>
    <name evidence="1" type="synonym">sun</name>
    <name type="ordered locus">SeAg_B3604</name>
</gene>
<evidence type="ECO:0000255" key="1">
    <source>
        <dbReference type="HAMAP-Rule" id="MF_01856"/>
    </source>
</evidence>
<evidence type="ECO:0000256" key="2">
    <source>
        <dbReference type="SAM" id="MobiDB-lite"/>
    </source>
</evidence>
<comment type="function">
    <text evidence="1">Specifically methylates the cytosine at position 967 (m5C967) of 16S rRNA.</text>
</comment>
<comment type="catalytic activity">
    <reaction evidence="1">
        <text>cytidine(967) in 16S rRNA + S-adenosyl-L-methionine = 5-methylcytidine(967) in 16S rRNA + S-adenosyl-L-homocysteine + H(+)</text>
        <dbReference type="Rhea" id="RHEA:42748"/>
        <dbReference type="Rhea" id="RHEA-COMP:10219"/>
        <dbReference type="Rhea" id="RHEA-COMP:10220"/>
        <dbReference type="ChEBI" id="CHEBI:15378"/>
        <dbReference type="ChEBI" id="CHEBI:57856"/>
        <dbReference type="ChEBI" id="CHEBI:59789"/>
        <dbReference type="ChEBI" id="CHEBI:74483"/>
        <dbReference type="ChEBI" id="CHEBI:82748"/>
        <dbReference type="EC" id="2.1.1.176"/>
    </reaction>
</comment>
<comment type="subcellular location">
    <subcellularLocation>
        <location evidence="1">Cytoplasm</location>
    </subcellularLocation>
</comment>
<comment type="similarity">
    <text evidence="1">Belongs to the class I-like SAM-binding methyltransferase superfamily. RsmB/NOP family.</text>
</comment>
<reference key="1">
    <citation type="journal article" date="2011" name="J. Bacteriol.">
        <title>Comparative genomics of 28 Salmonella enterica isolates: evidence for CRISPR-mediated adaptive sublineage evolution.</title>
        <authorList>
            <person name="Fricke W.F."/>
            <person name="Mammel M.K."/>
            <person name="McDermott P.F."/>
            <person name="Tartera C."/>
            <person name="White D.G."/>
            <person name="Leclerc J.E."/>
            <person name="Ravel J."/>
            <person name="Cebula T.A."/>
        </authorList>
    </citation>
    <scope>NUCLEOTIDE SEQUENCE [LARGE SCALE GENOMIC DNA]</scope>
    <source>
        <strain>SL483</strain>
    </source>
</reference>
<name>RSMB_SALA4</name>
<organism>
    <name type="scientific">Salmonella agona (strain SL483)</name>
    <dbReference type="NCBI Taxonomy" id="454166"/>
    <lineage>
        <taxon>Bacteria</taxon>
        <taxon>Pseudomonadati</taxon>
        <taxon>Pseudomonadota</taxon>
        <taxon>Gammaproteobacteria</taxon>
        <taxon>Enterobacterales</taxon>
        <taxon>Enterobacteriaceae</taxon>
        <taxon>Salmonella</taxon>
    </lineage>
</organism>
<sequence length="429" mass="48070">MKKQNNLRSLAAQAVEQVVEQGQSLSNVLPPLQQKVADKDKALLQELCFGVLRTLSQLEWLINKLMSRPMTGKQRTVHYLIMVGFYQLLYTRVPPHAALAETVEGAVSIKRPQLKGLINGVLRQFQRQQETLLNEFATSDARFLHPGWLVKRLQNAYPTQWQRIIEANNQRPPMWLRVNRTHHTRDGWLGLLEDAGMKGYPHPDYPDAVRLETPAPVHALPGFAEGWVTVQDASAQGCAVFLAPQNGEHILDLCAAPGGKTTHILEVAPEADVLAVDIDEQRLSRVYDNLKRLGMKATVKQGDGRYPAQWCGEQQFDRILLDAPCSATGVIRRHPDIKWLRRDRDIAELAQLQAEILDAVWPRLNPGGTLVYATCSVLPEENRDQIKAFLQRTPDAALSETGTPDQPGQQNLPGGEEGDGFFYAKLIKK</sequence>
<feature type="chain" id="PRO_0000366163" description="Ribosomal RNA small subunit methyltransferase B">
    <location>
        <begin position="1"/>
        <end position="429"/>
    </location>
</feature>
<feature type="region of interest" description="Disordered" evidence="2">
    <location>
        <begin position="397"/>
        <end position="419"/>
    </location>
</feature>
<feature type="compositionally biased region" description="Polar residues" evidence="2">
    <location>
        <begin position="400"/>
        <end position="412"/>
    </location>
</feature>
<feature type="active site" description="Nucleophile" evidence="1">
    <location>
        <position position="375"/>
    </location>
</feature>
<feature type="binding site" evidence="1">
    <location>
        <begin position="254"/>
        <end position="260"/>
    </location>
    <ligand>
        <name>S-adenosyl-L-methionine</name>
        <dbReference type="ChEBI" id="CHEBI:59789"/>
    </ligand>
</feature>
<feature type="binding site" evidence="1">
    <location>
        <position position="277"/>
    </location>
    <ligand>
        <name>S-adenosyl-L-methionine</name>
        <dbReference type="ChEBI" id="CHEBI:59789"/>
    </ligand>
</feature>
<feature type="binding site" evidence="1">
    <location>
        <position position="303"/>
    </location>
    <ligand>
        <name>S-adenosyl-L-methionine</name>
        <dbReference type="ChEBI" id="CHEBI:59789"/>
    </ligand>
</feature>
<feature type="binding site" evidence="1">
    <location>
        <position position="322"/>
    </location>
    <ligand>
        <name>S-adenosyl-L-methionine</name>
        <dbReference type="ChEBI" id="CHEBI:59789"/>
    </ligand>
</feature>
<accession>B5F7R5</accession>
<proteinExistence type="inferred from homology"/>
<keyword id="KW-0963">Cytoplasm</keyword>
<keyword id="KW-0489">Methyltransferase</keyword>
<keyword id="KW-0694">RNA-binding</keyword>
<keyword id="KW-0698">rRNA processing</keyword>
<keyword id="KW-0949">S-adenosyl-L-methionine</keyword>
<keyword id="KW-0808">Transferase</keyword>